<proteinExistence type="inferred from homology"/>
<protein>
    <recommendedName>
        <fullName evidence="1">Structure-specific endonuclease subunit SLX4</fullName>
    </recommendedName>
</protein>
<accession>A7TEM0</accession>
<gene>
    <name evidence="1" type="primary">SLX4</name>
    <name type="ORF">Kpol_1036p73</name>
</gene>
<reference key="1">
    <citation type="journal article" date="2007" name="Proc. Natl. Acad. Sci. U.S.A.">
        <title>Independent sorting-out of thousands of duplicated gene pairs in two yeast species descended from a whole-genome duplication.</title>
        <authorList>
            <person name="Scannell D.R."/>
            <person name="Frank A.C."/>
            <person name="Conant G.C."/>
            <person name="Byrne K.P."/>
            <person name="Woolfit M."/>
            <person name="Wolfe K.H."/>
        </authorList>
    </citation>
    <scope>NUCLEOTIDE SEQUENCE [LARGE SCALE GENOMIC DNA]</scope>
    <source>
        <strain>ATCC 22028 / DSM 70294 / BCRC 21397 / CBS 2163 / NBRC 10782 / NRRL Y-8283 / UCD 57-17</strain>
    </source>
</reference>
<evidence type="ECO:0000255" key="1">
    <source>
        <dbReference type="HAMAP-Rule" id="MF_03110"/>
    </source>
</evidence>
<evidence type="ECO:0000256" key="2">
    <source>
        <dbReference type="SAM" id="MobiDB-lite"/>
    </source>
</evidence>
<feature type="chain" id="PRO_0000388050" description="Structure-specific endonuclease subunit SLX4">
    <location>
        <begin position="1"/>
        <end position="680"/>
    </location>
</feature>
<feature type="region of interest" description="Disordered" evidence="2">
    <location>
        <begin position="15"/>
        <end position="92"/>
    </location>
</feature>
<feature type="region of interest" description="Disordered" evidence="2">
    <location>
        <begin position="141"/>
        <end position="183"/>
    </location>
</feature>
<feature type="region of interest" description="Disordered" evidence="2">
    <location>
        <begin position="450"/>
        <end position="490"/>
    </location>
</feature>
<feature type="compositionally biased region" description="Acidic residues" evidence="2">
    <location>
        <begin position="22"/>
        <end position="33"/>
    </location>
</feature>
<feature type="compositionally biased region" description="Basic and acidic residues" evidence="2">
    <location>
        <begin position="60"/>
        <end position="86"/>
    </location>
</feature>
<feature type="compositionally biased region" description="Basic residues" evidence="2">
    <location>
        <begin position="156"/>
        <end position="174"/>
    </location>
</feature>
<feature type="compositionally biased region" description="Polar residues" evidence="2">
    <location>
        <begin position="473"/>
        <end position="490"/>
    </location>
</feature>
<dbReference type="EMBL" id="DS480380">
    <property type="protein sequence ID" value="EDO19327.1"/>
    <property type="molecule type" value="Genomic_DNA"/>
</dbReference>
<dbReference type="RefSeq" id="XP_001647185.1">
    <property type="nucleotide sequence ID" value="XM_001647135.1"/>
</dbReference>
<dbReference type="SMR" id="A7TEM0"/>
<dbReference type="FunCoup" id="A7TEM0">
    <property type="interactions" value="52"/>
</dbReference>
<dbReference type="STRING" id="436907.A7TEM0"/>
<dbReference type="GeneID" id="5547668"/>
<dbReference type="KEGG" id="vpo:Kpol_1036p73"/>
<dbReference type="eggNOG" id="ENOG502RYEW">
    <property type="taxonomic scope" value="Eukaryota"/>
</dbReference>
<dbReference type="HOGENOM" id="CLU_022388_0_0_1"/>
<dbReference type="InParanoid" id="A7TEM0"/>
<dbReference type="OMA" id="FMNTQIQ"/>
<dbReference type="OrthoDB" id="4066789at2759"/>
<dbReference type="PhylomeDB" id="A7TEM0"/>
<dbReference type="Proteomes" id="UP000000267">
    <property type="component" value="Unassembled WGS sequence"/>
</dbReference>
<dbReference type="GO" id="GO:1905348">
    <property type="term" value="C:endonuclease complex"/>
    <property type="evidence" value="ECO:0007669"/>
    <property type="project" value="EnsemblFungi"/>
</dbReference>
<dbReference type="GO" id="GO:0033557">
    <property type="term" value="C:Slx1-Slx4 complex"/>
    <property type="evidence" value="ECO:0007669"/>
    <property type="project" value="UniProtKB-UniRule"/>
</dbReference>
<dbReference type="GO" id="GO:0017108">
    <property type="term" value="F:5'-flap endonuclease activity"/>
    <property type="evidence" value="ECO:0007669"/>
    <property type="project" value="EnsemblFungi"/>
</dbReference>
<dbReference type="GO" id="GO:0006261">
    <property type="term" value="P:DNA-templated DNA replication"/>
    <property type="evidence" value="ECO:0007669"/>
    <property type="project" value="EnsemblFungi"/>
</dbReference>
<dbReference type="GO" id="GO:0000727">
    <property type="term" value="P:double-strand break repair via break-induced replication"/>
    <property type="evidence" value="ECO:0007669"/>
    <property type="project" value="EnsemblFungi"/>
</dbReference>
<dbReference type="GO" id="GO:0000736">
    <property type="term" value="P:double-strand break repair via single-strand annealing, removal of nonhomologous ends"/>
    <property type="evidence" value="ECO:0007669"/>
    <property type="project" value="EnsemblFungi"/>
</dbReference>
<dbReference type="GO" id="GO:0036297">
    <property type="term" value="P:interstrand cross-link repair"/>
    <property type="evidence" value="ECO:0007669"/>
    <property type="project" value="EnsemblFungi"/>
</dbReference>
<dbReference type="GO" id="GO:2000001">
    <property type="term" value="P:regulation of DNA damage checkpoint"/>
    <property type="evidence" value="ECO:0007669"/>
    <property type="project" value="EnsemblFungi"/>
</dbReference>
<dbReference type="GO" id="GO:1903775">
    <property type="term" value="P:regulation of DNA double-strand break processing"/>
    <property type="evidence" value="ECO:0007669"/>
    <property type="project" value="EnsemblFungi"/>
</dbReference>
<dbReference type="GO" id="GO:1905261">
    <property type="term" value="P:regulation of meiotic DNA double-strand break formation involved in reciprocal meiotic recombination"/>
    <property type="evidence" value="ECO:0007669"/>
    <property type="project" value="EnsemblFungi"/>
</dbReference>
<dbReference type="HAMAP" id="MF_03110">
    <property type="entry name" value="Endonuc_su_Slx4"/>
    <property type="match status" value="1"/>
</dbReference>
<dbReference type="InterPro" id="IPR027784">
    <property type="entry name" value="Slx4_ascomycetes"/>
</dbReference>
<dbReference type="InterPro" id="IPR018574">
    <property type="entry name" value="Structure-sp_endonuc_su_Slx4"/>
</dbReference>
<dbReference type="Pfam" id="PF09494">
    <property type="entry name" value="Slx4"/>
    <property type="match status" value="1"/>
</dbReference>
<sequence>MDFRQAQRNLELIEEVAKNSQDSDEPIIDEDDLKEGKVEEEGEGTQIPSMPFSDDDDSDNNSKDTFKETPLELVDKEEAIEDKAPNDDEPVVSVEEKIATQEPEPEEQIFMNTQIQGQLDDIEQEDNLRSKLSNFKYASEESSSVQVIKRSNERKLKSKKITKPKLTKTSKRTKTNSNPSTQQTLDEIKISRSENILKLLSGKHGKVKDMINHQRNVEKKVKLVKNKNSNIITYDTYNSEEWLRIMKLILEKFPSANDMEVKQVYHYIYGEEQEQEYDNLWEASQIPLASMREEAYNEDNQIDRKIPNIPNSTQTRVEVMSLSQVMDDVSIIEESKKTTIDSEREMHIYEVPDSTDDEDSRIIRVISGSDEVASIVAESEFSTETESTSTQFFTADGNMVDGVIDLTQGSFKAVTKLFSPLKVDTLLSINKNKEKVQVAVTRTSTRFSNLGSGPVGLEETPRLAPDEAATPPTVISRSPQSTRTPQATRLPNPNITVMYEVNKCELQSSNSYQSRSSEDIRIVNQYDIDVRDSQDEYDSATEKCLIEFAVTNSATPSVQPEDVMNVISSQSVQKLRQDLKTIGLKPVRTKAKMIEALMAASQVLDTDNVDQEQTREALYDQLTSMIKQIPELVSKISRFEPITMEELVLQLIEVNPFADHIDESTIKEWADIQGITLRNN</sequence>
<comment type="function">
    <text evidence="1">Regulatory subunit of the SLX1-SLX4 structure-specific endonuclease that resolves DNA secondary structures generated during DNA repair and recombination. Has endonuclease activity towards branched DNA substrates, introducing single-strand cuts in duplex DNA close to junctions with ss-DNA.</text>
</comment>
<comment type="subunit">
    <text evidence="1">Forms a heterodimer with SLX1.</text>
</comment>
<comment type="subcellular location">
    <subcellularLocation>
        <location evidence="1">Nucleus</location>
    </subcellularLocation>
</comment>
<comment type="PTM">
    <text evidence="1">Phosphorylated in response to DNA damage.</text>
</comment>
<comment type="similarity">
    <text evidence="1">Belongs to the SLX4 family.</text>
</comment>
<organism>
    <name type="scientific">Vanderwaltozyma polyspora (strain ATCC 22028 / DSM 70294 / BCRC 21397 / CBS 2163 / NBRC 10782 / NRRL Y-8283 / UCD 57-17)</name>
    <name type="common">Kluyveromyces polysporus</name>
    <dbReference type="NCBI Taxonomy" id="436907"/>
    <lineage>
        <taxon>Eukaryota</taxon>
        <taxon>Fungi</taxon>
        <taxon>Dikarya</taxon>
        <taxon>Ascomycota</taxon>
        <taxon>Saccharomycotina</taxon>
        <taxon>Saccharomycetes</taxon>
        <taxon>Saccharomycetales</taxon>
        <taxon>Saccharomycetaceae</taxon>
        <taxon>Vanderwaltozyma</taxon>
    </lineage>
</organism>
<name>SLX4_VANPO</name>
<keyword id="KW-0227">DNA damage</keyword>
<keyword id="KW-0233">DNA recombination</keyword>
<keyword id="KW-0234">DNA repair</keyword>
<keyword id="KW-0539">Nucleus</keyword>
<keyword id="KW-0597">Phosphoprotein</keyword>
<keyword id="KW-1185">Reference proteome</keyword>